<sequence>MVILEQTHLVKNKAVDNKKSMKYSIFQQALTIAVILLISKIIESFMPIPMPASVIGLVLLFIALCTGIVKLGQVETVGTALTNNIGFLFVPAGISVINSLPILKQSPILIILLIIISTLLLLICTGFSSQLLVTKSLFPSKEKNEETSHIGG</sequence>
<proteinExistence type="inferred from homology"/>
<gene>
    <name evidence="1" type="primary">lrgA</name>
    <name type="ordered locus">SE_2013</name>
</gene>
<organism>
    <name type="scientific">Staphylococcus epidermidis (strain ATCC 12228 / FDA PCI 1200)</name>
    <dbReference type="NCBI Taxonomy" id="176280"/>
    <lineage>
        <taxon>Bacteria</taxon>
        <taxon>Bacillati</taxon>
        <taxon>Bacillota</taxon>
        <taxon>Bacilli</taxon>
        <taxon>Bacillales</taxon>
        <taxon>Staphylococcaceae</taxon>
        <taxon>Staphylococcus</taxon>
    </lineage>
</organism>
<dbReference type="EMBL" id="AE015929">
    <property type="protein sequence ID" value="AAO05654.1"/>
    <property type="molecule type" value="Genomic_DNA"/>
</dbReference>
<dbReference type="RefSeq" id="NP_765568.1">
    <property type="nucleotide sequence ID" value="NC_004461.1"/>
</dbReference>
<dbReference type="SMR" id="Q8CN54"/>
<dbReference type="KEGG" id="sep:SE_2013"/>
<dbReference type="PATRIC" id="fig|176280.10.peg.1966"/>
<dbReference type="eggNOG" id="COG1380">
    <property type="taxonomic scope" value="Bacteria"/>
</dbReference>
<dbReference type="HOGENOM" id="CLU_113736_0_1_9"/>
<dbReference type="OrthoDB" id="3176438at2"/>
<dbReference type="Proteomes" id="UP000001411">
    <property type="component" value="Chromosome"/>
</dbReference>
<dbReference type="GO" id="GO:0005886">
    <property type="term" value="C:plasma membrane"/>
    <property type="evidence" value="ECO:0007669"/>
    <property type="project" value="UniProtKB-SubCell"/>
</dbReference>
<dbReference type="GO" id="GO:0019835">
    <property type="term" value="P:cytolysis"/>
    <property type="evidence" value="ECO:0007669"/>
    <property type="project" value="UniProtKB-UniRule"/>
</dbReference>
<dbReference type="GO" id="GO:0031640">
    <property type="term" value="P:killing of cells of another organism"/>
    <property type="evidence" value="ECO:0007669"/>
    <property type="project" value="UniProtKB-KW"/>
</dbReference>
<dbReference type="GO" id="GO:0012501">
    <property type="term" value="P:programmed cell death"/>
    <property type="evidence" value="ECO:0007669"/>
    <property type="project" value="UniProtKB-UniRule"/>
</dbReference>
<dbReference type="HAMAP" id="MF_01141">
    <property type="entry name" value="LrgA"/>
    <property type="match status" value="1"/>
</dbReference>
<dbReference type="InterPro" id="IPR023736">
    <property type="entry name" value="Antiholin-like_LrgA"/>
</dbReference>
<dbReference type="InterPro" id="IPR005538">
    <property type="entry name" value="LrgA/CidA"/>
</dbReference>
<dbReference type="NCBIfam" id="NF003155">
    <property type="entry name" value="PRK04125.1"/>
    <property type="match status" value="1"/>
</dbReference>
<dbReference type="PANTHER" id="PTHR33931:SF4">
    <property type="entry name" value="ANTIHOLIN-LIKE PROTEIN LRGA"/>
    <property type="match status" value="1"/>
</dbReference>
<dbReference type="PANTHER" id="PTHR33931">
    <property type="entry name" value="HOLIN-LIKE PROTEIN CIDA-RELATED"/>
    <property type="match status" value="1"/>
</dbReference>
<dbReference type="Pfam" id="PF03788">
    <property type="entry name" value="LrgA"/>
    <property type="match status" value="1"/>
</dbReference>
<keyword id="KW-1003">Cell membrane</keyword>
<keyword id="KW-0204">Cytolysis</keyword>
<keyword id="KW-0472">Membrane</keyword>
<keyword id="KW-0812">Transmembrane</keyword>
<keyword id="KW-1133">Transmembrane helix</keyword>
<reference key="1">
    <citation type="journal article" date="2003" name="Mol. Microbiol.">
        <title>Genome-based analysis of virulence genes in a non-biofilm-forming Staphylococcus epidermidis strain (ATCC 12228).</title>
        <authorList>
            <person name="Zhang Y.-Q."/>
            <person name="Ren S.-X."/>
            <person name="Li H.-L."/>
            <person name="Wang Y.-X."/>
            <person name="Fu G."/>
            <person name="Yang J."/>
            <person name="Qin Z.-Q."/>
            <person name="Miao Y.-G."/>
            <person name="Wang W.-Y."/>
            <person name="Chen R.-S."/>
            <person name="Shen Y."/>
            <person name="Chen Z."/>
            <person name="Yuan Z.-H."/>
            <person name="Zhao G.-P."/>
            <person name="Qu D."/>
            <person name="Danchin A."/>
            <person name="Wen Y.-M."/>
        </authorList>
    </citation>
    <scope>NUCLEOTIDE SEQUENCE [LARGE SCALE GENOMIC DNA]</scope>
    <source>
        <strain>ATCC 12228 / FDA PCI 1200</strain>
    </source>
</reference>
<evidence type="ECO:0000255" key="1">
    <source>
        <dbReference type="HAMAP-Rule" id="MF_01141"/>
    </source>
</evidence>
<protein>
    <recommendedName>
        <fullName evidence="1">Antiholin-like protein LrgA</fullName>
    </recommendedName>
</protein>
<feature type="chain" id="PRO_0000213197" description="Antiholin-like protein LrgA">
    <location>
        <begin position="1"/>
        <end position="152"/>
    </location>
</feature>
<feature type="transmembrane region" description="Helical" evidence="1">
    <location>
        <begin position="23"/>
        <end position="43"/>
    </location>
</feature>
<feature type="transmembrane region" description="Helical" evidence="1">
    <location>
        <begin position="45"/>
        <end position="65"/>
    </location>
</feature>
<feature type="transmembrane region" description="Helical" evidence="1">
    <location>
        <begin position="77"/>
        <end position="97"/>
    </location>
</feature>
<feature type="transmembrane region" description="Helical" evidence="1">
    <location>
        <begin position="108"/>
        <end position="128"/>
    </location>
</feature>
<name>LRGA_STAES</name>
<comment type="function">
    <text evidence="1">Inhibits the expression or activity of extracellular murein hydrolases by interacting, possibly with LrgB, with the holin-like proteins CidA and/or CidB. The LrgAB and CidAB proteins may affect the proton motive force of the membrane. May be involved in programmed cell death (PCD), possibly triggering PCD in response to antibiotics and environmental stresses.</text>
</comment>
<comment type="subcellular location">
    <subcellularLocation>
        <location evidence="1">Cell membrane</location>
        <topology evidence="1">Multi-pass membrane protein</topology>
    </subcellularLocation>
</comment>
<comment type="similarity">
    <text evidence="1">Belongs to the CidA/LrgA family. LrgA subfamily.</text>
</comment>
<accession>Q8CN54</accession>